<evidence type="ECO:0000250" key="1">
    <source>
        <dbReference type="UniProtKB" id="P45513"/>
    </source>
</evidence>
<evidence type="ECO:0000305" key="2"/>
<name>DHAT_KLEPN</name>
<gene>
    <name type="primary">dhaT</name>
</gene>
<accession>Q59477</accession>
<protein>
    <recommendedName>
        <fullName evidence="1">1,3-propanediol dehydrogenase</fullName>
        <ecNumber evidence="1">1.1.1.202</ecNumber>
    </recommendedName>
    <alternativeName>
        <fullName evidence="1">1,3-propanediol oxidoreductase</fullName>
    </alternativeName>
    <alternativeName>
        <fullName evidence="1">3-hydroxypropionaldehyde reductase</fullName>
    </alternativeName>
</protein>
<dbReference type="EC" id="1.1.1.202" evidence="1"/>
<dbReference type="EMBL" id="U30903">
    <property type="protein sequence ID" value="AAA74260.1"/>
    <property type="molecule type" value="Genomic_DNA"/>
</dbReference>
<dbReference type="RefSeq" id="WP_004150927.1">
    <property type="nucleotide sequence ID" value="NZ_WYAM01000014.1"/>
</dbReference>
<dbReference type="PDB" id="3BFJ">
    <property type="method" value="X-ray"/>
    <property type="resolution" value="2.70 A"/>
    <property type="chains" value="A/B/C/D/E/F/G/H/I/J/K/L/M/N/O/P/Q/R/S/T=1-387"/>
</dbReference>
<dbReference type="PDBsum" id="3BFJ"/>
<dbReference type="SMR" id="Q59477"/>
<dbReference type="OMA" id="PRVWEYN"/>
<dbReference type="BRENDA" id="1.1.1.202">
    <property type="organism ID" value="2814"/>
</dbReference>
<dbReference type="GO" id="GO:0047516">
    <property type="term" value="F:1,3-propanediol dehydrogenase activity"/>
    <property type="evidence" value="ECO:0007669"/>
    <property type="project" value="UniProtKB-EC"/>
</dbReference>
<dbReference type="GO" id="GO:0004022">
    <property type="term" value="F:alcohol dehydrogenase (NAD+) activity"/>
    <property type="evidence" value="ECO:0007669"/>
    <property type="project" value="TreeGrafter"/>
</dbReference>
<dbReference type="GO" id="GO:0046872">
    <property type="term" value="F:metal ion binding"/>
    <property type="evidence" value="ECO:0007669"/>
    <property type="project" value="InterPro"/>
</dbReference>
<dbReference type="CDD" id="cd08188">
    <property type="entry name" value="PDDH"/>
    <property type="match status" value="1"/>
</dbReference>
<dbReference type="FunFam" id="3.40.50.1970:FF:000003">
    <property type="entry name" value="Alcohol dehydrogenase, iron-containing"/>
    <property type="match status" value="1"/>
</dbReference>
<dbReference type="FunFam" id="1.20.1090.10:FF:000001">
    <property type="entry name" value="Aldehyde-alcohol dehydrogenase"/>
    <property type="match status" value="1"/>
</dbReference>
<dbReference type="Gene3D" id="3.40.50.1970">
    <property type="match status" value="1"/>
</dbReference>
<dbReference type="Gene3D" id="1.20.1090.10">
    <property type="entry name" value="Dehydroquinate synthase-like - alpha domain"/>
    <property type="match status" value="1"/>
</dbReference>
<dbReference type="InterPro" id="IPR001670">
    <property type="entry name" value="ADH_Fe/GldA"/>
</dbReference>
<dbReference type="InterPro" id="IPR056798">
    <property type="entry name" value="ADH_Fe_C"/>
</dbReference>
<dbReference type="InterPro" id="IPR018211">
    <property type="entry name" value="ADH_Fe_CS"/>
</dbReference>
<dbReference type="InterPro" id="IPR039697">
    <property type="entry name" value="Alcohol_dehydrogenase_Fe"/>
</dbReference>
<dbReference type="PANTHER" id="PTHR11496">
    <property type="entry name" value="ALCOHOL DEHYDROGENASE"/>
    <property type="match status" value="1"/>
</dbReference>
<dbReference type="PANTHER" id="PTHR11496:SF102">
    <property type="entry name" value="ALCOHOL DEHYDROGENASE 4"/>
    <property type="match status" value="1"/>
</dbReference>
<dbReference type="Pfam" id="PF25137">
    <property type="entry name" value="ADH_Fe_C"/>
    <property type="match status" value="1"/>
</dbReference>
<dbReference type="Pfam" id="PF00465">
    <property type="entry name" value="Fe-ADH"/>
    <property type="match status" value="1"/>
</dbReference>
<dbReference type="SUPFAM" id="SSF56796">
    <property type="entry name" value="Dehydroquinate synthase-like"/>
    <property type="match status" value="1"/>
</dbReference>
<dbReference type="PROSITE" id="PS00913">
    <property type="entry name" value="ADH_IRON_1"/>
    <property type="match status" value="1"/>
</dbReference>
<dbReference type="PROSITE" id="PS00060">
    <property type="entry name" value="ADH_IRON_2"/>
    <property type="match status" value="1"/>
</dbReference>
<feature type="chain" id="PRO_0000087842" description="1,3-propanediol dehydrogenase">
    <location>
        <begin position="1"/>
        <end position="387"/>
    </location>
</feature>
<sequence length="387" mass="41466">MSYRMFDYLVPNVNFFGPNAISVVGERCQLLGGKKALLVTDKGLRAIKDGAVDKTLHYLREAGIEVAIFDGVEPNPKDTNVRDGLAVFRREQCDIIVTVGGGSPHDCGKGIGIAATHEGDLYQYAGIETLTNPLPPIVAVNTTAGTASEVTRHCVLTNTETKVKFVIVSWRNLPSVSINDPLLMIGKPAALTAATGMDALTHAVEAYISKDANPVTDAAAMQAIRLIARNLRQAVALGSNLQARENMAYASLLAGMAFNNANLGYVHAMAHQLGGLYDMPHGVANAVLLPHVARYNLIANPEKFADIAELMGENITGLSTLDAAEKAIAAITRLSMDIGIPQHLRDLGVKEADFPYMAEMALKDGNAFSNPRKGNEQEIAAIFRQAF</sequence>
<organism>
    <name type="scientific">Klebsiella pneumoniae</name>
    <dbReference type="NCBI Taxonomy" id="573"/>
    <lineage>
        <taxon>Bacteria</taxon>
        <taxon>Pseudomonadati</taxon>
        <taxon>Pseudomonadota</taxon>
        <taxon>Gammaproteobacteria</taxon>
        <taxon>Enterobacterales</taxon>
        <taxon>Enterobacteriaceae</taxon>
        <taxon>Klebsiella/Raoultella group</taxon>
        <taxon>Klebsiella</taxon>
        <taxon>Klebsiella pneumoniae complex</taxon>
    </lineage>
</organism>
<keyword id="KW-0002">3D-structure</keyword>
<keyword id="KW-0408">Iron</keyword>
<keyword id="KW-0520">NAD</keyword>
<keyword id="KW-0560">Oxidoreductase</keyword>
<proteinExistence type="evidence at protein level"/>
<reference key="1">
    <citation type="submission" date="1995-11" db="EMBL/GenBank/DDBJ databases">
        <authorList>
            <person name="Skraly F.A."/>
            <person name="Willard B.L."/>
            <person name="Cameron D.C."/>
        </authorList>
    </citation>
    <scope>NUCLEOTIDE SEQUENCE [GENOMIC DNA]</scope>
    <source>
        <strain>ATCC 25955</strain>
    </source>
</reference>
<comment type="catalytic activity">
    <reaction evidence="1">
        <text>propane-1,3-diol + NAD(+) = 3-hydroxypropanal + NADH + H(+)</text>
        <dbReference type="Rhea" id="RHEA:23188"/>
        <dbReference type="ChEBI" id="CHEBI:15378"/>
        <dbReference type="ChEBI" id="CHEBI:16109"/>
        <dbReference type="ChEBI" id="CHEBI:17871"/>
        <dbReference type="ChEBI" id="CHEBI:57540"/>
        <dbReference type="ChEBI" id="CHEBI:57945"/>
        <dbReference type="EC" id="1.1.1.202"/>
    </reaction>
</comment>
<comment type="cofactor">
    <cofactor evidence="1">
        <name>Fe cation</name>
        <dbReference type="ChEBI" id="CHEBI:24875"/>
    </cofactor>
</comment>
<comment type="subunit">
    <text evidence="1">Homooctamer.</text>
</comment>
<comment type="similarity">
    <text evidence="2">Belongs to the iron-containing alcohol dehydrogenase family.</text>
</comment>